<reference key="1">
    <citation type="journal article" date="2010" name="Genome Biol.">
        <title>A first genome assembly of the barley fungal pathogen Pyrenophora teres f. teres.</title>
        <authorList>
            <person name="Ellwood S.R."/>
            <person name="Liu Z."/>
            <person name="Syme R.A."/>
            <person name="Lai Z."/>
            <person name="Hane J.K."/>
            <person name="Keiper F."/>
            <person name="Moffat C.S."/>
            <person name="Oliver R.P."/>
            <person name="Friesen T.L."/>
        </authorList>
    </citation>
    <scope>NUCLEOTIDE SEQUENCE [LARGE SCALE GENOMIC DNA]</scope>
    <source>
        <strain>0-1</strain>
    </source>
</reference>
<proteinExistence type="inferred from homology"/>
<gene>
    <name type="primary">nop9</name>
    <name type="ORF">PTT_10363</name>
</gene>
<comment type="function">
    <text evidence="1">RNA-binding nucleolar protein required for pre-rRNA processing. Involved in production of 18S rRNA and assembly of small ribosomal subunit (By similarity).</text>
</comment>
<comment type="subcellular location">
    <subcellularLocation>
        <location evidence="1">Nucleus</location>
        <location evidence="1">Nucleolus</location>
    </subcellularLocation>
</comment>
<comment type="similarity">
    <text evidence="3">Belongs to the NOP9 family.</text>
</comment>
<protein>
    <recommendedName>
        <fullName>Nucleolar protein 9</fullName>
    </recommendedName>
    <alternativeName>
        <fullName>Pumilio domain-containing protein nop9</fullName>
    </alternativeName>
</protein>
<evidence type="ECO:0000250" key="1"/>
<evidence type="ECO:0000256" key="2">
    <source>
        <dbReference type="SAM" id="MobiDB-lite"/>
    </source>
</evidence>
<evidence type="ECO:0000305" key="3"/>
<keyword id="KW-0539">Nucleus</keyword>
<keyword id="KW-1185">Reference proteome</keyword>
<keyword id="KW-0677">Repeat</keyword>
<keyword id="KW-0690">Ribosome biogenesis</keyword>
<keyword id="KW-0698">rRNA processing</keyword>
<dbReference type="EMBL" id="GL534277">
    <property type="protein sequence ID" value="EFQ92523.1"/>
    <property type="molecule type" value="Genomic_DNA"/>
</dbReference>
<dbReference type="RefSeq" id="XP_003299387.1">
    <property type="nucleotide sequence ID" value="XM_003299339.1"/>
</dbReference>
<dbReference type="SMR" id="E3RP32"/>
<dbReference type="STRING" id="861557.E3RP32"/>
<dbReference type="EnsemblFungi" id="EFQ92523">
    <property type="protein sequence ID" value="EFQ92523"/>
    <property type="gene ID" value="PTT_10363"/>
</dbReference>
<dbReference type="KEGG" id="pte:PTT_10363"/>
<dbReference type="eggNOG" id="KOG2188">
    <property type="taxonomic scope" value="Eukaryota"/>
</dbReference>
<dbReference type="HOGENOM" id="CLU_008720_1_1_1"/>
<dbReference type="OrthoDB" id="392571at2759"/>
<dbReference type="Proteomes" id="UP000001067">
    <property type="component" value="Unassembled WGS sequence"/>
</dbReference>
<dbReference type="GO" id="GO:0030686">
    <property type="term" value="C:90S preribosome"/>
    <property type="evidence" value="ECO:0007669"/>
    <property type="project" value="TreeGrafter"/>
</dbReference>
<dbReference type="GO" id="GO:0005730">
    <property type="term" value="C:nucleolus"/>
    <property type="evidence" value="ECO:0007669"/>
    <property type="project" value="UniProtKB-SubCell"/>
</dbReference>
<dbReference type="GO" id="GO:0030688">
    <property type="term" value="C:preribosome, small subunit precursor"/>
    <property type="evidence" value="ECO:0007669"/>
    <property type="project" value="TreeGrafter"/>
</dbReference>
<dbReference type="GO" id="GO:0003723">
    <property type="term" value="F:RNA binding"/>
    <property type="evidence" value="ECO:0007669"/>
    <property type="project" value="InterPro"/>
</dbReference>
<dbReference type="GO" id="GO:0000480">
    <property type="term" value="P:endonucleolytic cleavage in 5'-ETS of tricistronic rRNA transcript (SSU-rRNA, 5.8S rRNA, LSU-rRNA)"/>
    <property type="evidence" value="ECO:0007669"/>
    <property type="project" value="TreeGrafter"/>
</dbReference>
<dbReference type="GO" id="GO:0000447">
    <property type="term" value="P:endonucleolytic cleavage in ITS1 to separate SSU-rRNA from 5.8S rRNA and LSU-rRNA from tricistronic rRNA transcript (SSU-rRNA, 5.8S rRNA, LSU-rRNA)"/>
    <property type="evidence" value="ECO:0007669"/>
    <property type="project" value="TreeGrafter"/>
</dbReference>
<dbReference type="GO" id="GO:0000472">
    <property type="term" value="P:endonucleolytic cleavage to generate mature 5'-end of SSU-rRNA from (SSU-rRNA, 5.8S rRNA, LSU-rRNA)"/>
    <property type="evidence" value="ECO:0007669"/>
    <property type="project" value="TreeGrafter"/>
</dbReference>
<dbReference type="GO" id="GO:0000056">
    <property type="term" value="P:ribosomal small subunit export from nucleus"/>
    <property type="evidence" value="ECO:0007669"/>
    <property type="project" value="TreeGrafter"/>
</dbReference>
<dbReference type="Gene3D" id="1.25.10.10">
    <property type="entry name" value="Leucine-rich Repeat Variant"/>
    <property type="match status" value="2"/>
</dbReference>
<dbReference type="InterPro" id="IPR011989">
    <property type="entry name" value="ARM-like"/>
</dbReference>
<dbReference type="InterPro" id="IPR016024">
    <property type="entry name" value="ARM-type_fold"/>
</dbReference>
<dbReference type="InterPro" id="IPR040000">
    <property type="entry name" value="NOP9"/>
</dbReference>
<dbReference type="InterPro" id="IPR001313">
    <property type="entry name" value="Pumilio_RNA-bd_rpt"/>
</dbReference>
<dbReference type="PANTHER" id="PTHR13102">
    <property type="entry name" value="NUCLEOLAR PROTEIN 9"/>
    <property type="match status" value="1"/>
</dbReference>
<dbReference type="PANTHER" id="PTHR13102:SF0">
    <property type="entry name" value="NUCLEOLAR PROTEIN 9"/>
    <property type="match status" value="1"/>
</dbReference>
<dbReference type="Pfam" id="PF22493">
    <property type="entry name" value="PUF_NOP9"/>
    <property type="match status" value="1"/>
</dbReference>
<dbReference type="SMART" id="SM00025">
    <property type="entry name" value="Pumilio"/>
    <property type="match status" value="6"/>
</dbReference>
<dbReference type="SUPFAM" id="SSF48371">
    <property type="entry name" value="ARM repeat"/>
    <property type="match status" value="1"/>
</dbReference>
<feature type="chain" id="PRO_0000407832" description="Nucleolar protein 9">
    <location>
        <begin position="1"/>
        <end position="700"/>
    </location>
</feature>
<feature type="repeat" description="Pumilio 1">
    <location>
        <begin position="200"/>
        <end position="239"/>
    </location>
</feature>
<feature type="repeat" description="Pumilio 2">
    <location>
        <begin position="336"/>
        <end position="371"/>
    </location>
</feature>
<feature type="repeat" description="Pumilio 3">
    <location>
        <begin position="372"/>
        <end position="412"/>
    </location>
</feature>
<feature type="repeat" description="Pumilio 4">
    <location>
        <begin position="509"/>
        <end position="547"/>
    </location>
</feature>
<feature type="region of interest" description="Disordered" evidence="2">
    <location>
        <begin position="1"/>
        <end position="53"/>
    </location>
</feature>
<feature type="region of interest" description="Disordered" evidence="2">
    <location>
        <begin position="631"/>
        <end position="700"/>
    </location>
</feature>
<feature type="compositionally biased region" description="Basic and acidic residues" evidence="2">
    <location>
        <begin position="10"/>
        <end position="39"/>
    </location>
</feature>
<feature type="compositionally biased region" description="Polar residues" evidence="2">
    <location>
        <begin position="631"/>
        <end position="642"/>
    </location>
</feature>
<feature type="compositionally biased region" description="Low complexity" evidence="2">
    <location>
        <begin position="664"/>
        <end position="674"/>
    </location>
</feature>
<feature type="compositionally biased region" description="Polar residues" evidence="2">
    <location>
        <begin position="685"/>
        <end position="700"/>
    </location>
</feature>
<sequence length="700" mass="78433">MPKEHKKRGRREDQKKRKRDHDDESASKRSRKEDVDHVQAENPLQHVANHVPRQDAAPFYGMLDEQEQEYFKKADEMLELNQFESPEDRRIFLASVCKEAEGKELKMATSQTSRLLERLILLASEDQLKSLFQTFSGHFLNLVQNRFASHCCETLFIKAASAVSQENASIKTEALNTPPASDPDEIIVSMENLFLYTLGELEGNIGFLMTEKYASHVLRVLLVILSGEPLEKQAKSVTQSKKKEKVTVSGAGDERILEKRVVPQSFLEALEKVISDSVSGIEPHYLRSLAIHPLGGPTLQLLLKLELSHFGKSRAKDEKSIIHRLLPDNPIAEGTESAILINGLVYDSVGSHLLETIIEHAPGKLFKQIYGEFFKERMGSLARNEIAGYVVGRILERLGKDDLEEAMRQIVDQIPSLVERNRTAPIKTLIERCVAREVDCSPIKAQLETAYAGPHGFEVTRILKLNEDDGKPRARHGESNEKVHGSLLAQTMMTVDGPLGQLVFDSLANLSPELSIQLARDGTASRTLQAALVSRNATVIFRRKMIQQFYGKIGELALDPKASHVVDAIWYGTVGLAFIRERIAEELAENENSLRESQVGRKVWKNWQMDLYKRRRNDWVAQARTTAGNEVFQSFPDESQSDAAAPARNHRTSRHMSAIELARQKFAAAKAAQAKDGKKPKKGSNRTNGSSETPKSLVAQ</sequence>
<name>NOP9_PYRTT</name>
<accession>E3RP32</accession>
<organism>
    <name type="scientific">Pyrenophora teres f. teres (strain 0-1)</name>
    <name type="common">Barley net blotch fungus</name>
    <name type="synonym">Drechslera teres f. teres</name>
    <dbReference type="NCBI Taxonomy" id="861557"/>
    <lineage>
        <taxon>Eukaryota</taxon>
        <taxon>Fungi</taxon>
        <taxon>Dikarya</taxon>
        <taxon>Ascomycota</taxon>
        <taxon>Pezizomycotina</taxon>
        <taxon>Dothideomycetes</taxon>
        <taxon>Pleosporomycetidae</taxon>
        <taxon>Pleosporales</taxon>
        <taxon>Pleosporineae</taxon>
        <taxon>Pleosporaceae</taxon>
        <taxon>Pyrenophora</taxon>
    </lineage>
</organism>